<accession>F4JKH6</accession>
<accession>Q9SUD1</accession>
<proteinExistence type="evidence at protein level"/>
<name>REC2_ARATH</name>
<comment type="function">
    <text evidence="5 6">Negatively regulates meristematic tissue proliferation by integrating developmental signals with carbon source availability (PubMed:21185286). May act as the scaffold of a protein complex, which sequesters key factors that are required for the G2 to M transition in meristematic tissues (PubMed:21185286). Together with REC2, REC3 and FMT/CLU, contributes to the establishment of the cellular volume devoted to the chloroplast compartment (PubMed:26862170).</text>
</comment>
<comment type="subcellular location">
    <subcellularLocation>
        <location evidence="1">Nucleus</location>
    </subcellularLocation>
    <subcellularLocation>
        <location evidence="1">Cytoplasm</location>
        <location evidence="1">Cytosol</location>
    </subcellularLocation>
</comment>
<comment type="tissue specificity">
    <text evidence="5">Expressed in the non-epidermal tissues of the true leaves (PubMed:21185286). Not detected in the vegetative shoot meristem and leaf primordia (PubMed:21185286).</text>
</comment>
<comment type="induction">
    <text evidence="5">Down-regulated by sucrose.</text>
</comment>
<comment type="disruption phenotype">
    <text evidence="5 6">No visible phenotype (PubMed:21185286). Reduced proportion of the cellular volume devoted to chloroplasts leading to an abnormal chloroplasts distributions (PubMed:26862170). Lower levels of chlorophyll, especially in plants lacking REC1, REC2, REC3 and FMT/CLU (PubMed:26862170).</text>
</comment>
<comment type="miscellaneous">
    <text evidence="7">The sucrose repression of TSS is a response specific to the rescue of stip mutants, and the presence of STIP in the wild-type may be sufficient to repress TSS expression even under sugar deprivation.</text>
</comment>
<comment type="sequence caution" evidence="9">
    <conflict type="erroneous gene model prediction">
        <sequence resource="EMBL-CDS" id="CAB36777"/>
    </conflict>
</comment>
<comment type="sequence caution" evidence="9">
    <conflict type="erroneous gene model prediction">
        <sequence resource="EMBL-CDS" id="CAB79610"/>
    </conflict>
</comment>
<keyword id="KW-0131">Cell cycle</keyword>
<keyword id="KW-0175">Coiled coil</keyword>
<keyword id="KW-0963">Cytoplasm</keyword>
<keyword id="KW-0217">Developmental protein</keyword>
<keyword id="KW-0539">Nucleus</keyword>
<keyword id="KW-0597">Phosphoprotein</keyword>
<keyword id="KW-1185">Reference proteome</keyword>
<keyword id="KW-0677">Repeat</keyword>
<keyword id="KW-0802">TPR repeat</keyword>
<dbReference type="EMBL" id="AL035524">
    <property type="protein sequence ID" value="CAB36777.1"/>
    <property type="status" value="ALT_SEQ"/>
    <property type="molecule type" value="Genomic_DNA"/>
</dbReference>
<dbReference type="EMBL" id="AL161572">
    <property type="protein sequence ID" value="CAB79610.1"/>
    <property type="status" value="ALT_SEQ"/>
    <property type="molecule type" value="Genomic_DNA"/>
</dbReference>
<dbReference type="EMBL" id="CP002687">
    <property type="protein sequence ID" value="AEE85436.1"/>
    <property type="molecule type" value="Genomic_DNA"/>
</dbReference>
<dbReference type="PIR" id="T02909">
    <property type="entry name" value="T02909"/>
</dbReference>
<dbReference type="RefSeq" id="NP_194537.7">
    <property type="nucleotide sequence ID" value="NM_118947.8"/>
</dbReference>
<dbReference type="SMR" id="F4JKH6"/>
<dbReference type="FunCoup" id="F4JKH6">
    <property type="interactions" value="1460"/>
</dbReference>
<dbReference type="STRING" id="3702.F4JKH6"/>
<dbReference type="iPTMnet" id="F4JKH6"/>
<dbReference type="PaxDb" id="3702-AT4G28080.1"/>
<dbReference type="ProteomicsDB" id="234652"/>
<dbReference type="EnsemblPlants" id="AT4G28080.1">
    <property type="protein sequence ID" value="AT4G28080.1"/>
    <property type="gene ID" value="AT4G28080"/>
</dbReference>
<dbReference type="GeneID" id="828923"/>
<dbReference type="Gramene" id="AT4G28080.1">
    <property type="protein sequence ID" value="AT4G28080.1"/>
    <property type="gene ID" value="AT4G28080"/>
</dbReference>
<dbReference type="KEGG" id="ath:AT4G28080"/>
<dbReference type="Araport" id="AT4G28080"/>
<dbReference type="TAIR" id="AT4G28080">
    <property type="gene designation" value="REC2"/>
</dbReference>
<dbReference type="eggNOG" id="KOG1839">
    <property type="taxonomic scope" value="Eukaryota"/>
</dbReference>
<dbReference type="HOGENOM" id="CLU_001902_0_0_1"/>
<dbReference type="InParanoid" id="F4JKH6"/>
<dbReference type="OMA" id="TLKWKWV"/>
<dbReference type="PRO" id="PR:F4JKH6"/>
<dbReference type="Proteomes" id="UP000006548">
    <property type="component" value="Chromosome 4"/>
</dbReference>
<dbReference type="ExpressionAtlas" id="F4JKH6">
    <property type="expression patterns" value="baseline and differential"/>
</dbReference>
<dbReference type="GO" id="GO:0005829">
    <property type="term" value="C:cytosol"/>
    <property type="evidence" value="ECO:0000250"/>
    <property type="project" value="UniProtKB"/>
</dbReference>
<dbReference type="GO" id="GO:0005634">
    <property type="term" value="C:nucleus"/>
    <property type="evidence" value="ECO:0000250"/>
    <property type="project" value="UniProtKB"/>
</dbReference>
<dbReference type="GO" id="GO:0005886">
    <property type="term" value="C:plasma membrane"/>
    <property type="evidence" value="ECO:0007005"/>
    <property type="project" value="TAIR"/>
</dbReference>
<dbReference type="GO" id="GO:0003729">
    <property type="term" value="F:mRNA binding"/>
    <property type="evidence" value="ECO:0000314"/>
    <property type="project" value="TAIR"/>
</dbReference>
<dbReference type="GO" id="GO:0019750">
    <property type="term" value="P:chloroplast localization"/>
    <property type="evidence" value="ECO:0000315"/>
    <property type="project" value="UniProtKB"/>
</dbReference>
<dbReference type="CDD" id="cd15466">
    <property type="entry name" value="CLU-central"/>
    <property type="match status" value="1"/>
</dbReference>
<dbReference type="FunFam" id="1.25.40.10:FF:000024">
    <property type="entry name" value="Tetratricopeptide repeat (TPR)-like superfamily protein"/>
    <property type="match status" value="1"/>
</dbReference>
<dbReference type="Gene3D" id="1.25.40.10">
    <property type="entry name" value="Tetratricopeptide repeat domain"/>
    <property type="match status" value="1"/>
</dbReference>
<dbReference type="InterPro" id="IPR033646">
    <property type="entry name" value="CLU-central"/>
</dbReference>
<dbReference type="InterPro" id="IPR025697">
    <property type="entry name" value="CLU_dom"/>
</dbReference>
<dbReference type="InterPro" id="IPR028275">
    <property type="entry name" value="CLU_N"/>
</dbReference>
<dbReference type="InterPro" id="IPR027523">
    <property type="entry name" value="CLU_prot"/>
</dbReference>
<dbReference type="InterPro" id="IPR011990">
    <property type="entry name" value="TPR-like_helical_dom_sf"/>
</dbReference>
<dbReference type="InterPro" id="IPR019734">
    <property type="entry name" value="TPR_rpt"/>
</dbReference>
<dbReference type="PANTHER" id="PTHR12601">
    <property type="entry name" value="EUKARYOTIC TRANSLATION INITIATION FACTOR 3 SUBUNIT EIF-3"/>
    <property type="match status" value="1"/>
</dbReference>
<dbReference type="PANTHER" id="PTHR12601:SF39">
    <property type="entry name" value="PROTEIN REDUCED CHLOROPLAST COVERAGE 2"/>
    <property type="match status" value="1"/>
</dbReference>
<dbReference type="Pfam" id="PF15044">
    <property type="entry name" value="CLU_N"/>
    <property type="match status" value="1"/>
</dbReference>
<dbReference type="Pfam" id="PF12807">
    <property type="entry name" value="eIF3_p135"/>
    <property type="match status" value="1"/>
</dbReference>
<dbReference type="Pfam" id="PF13424">
    <property type="entry name" value="TPR_12"/>
    <property type="match status" value="2"/>
</dbReference>
<dbReference type="SMART" id="SM00028">
    <property type="entry name" value="TPR"/>
    <property type="match status" value="3"/>
</dbReference>
<dbReference type="SUPFAM" id="SSF48452">
    <property type="entry name" value="TPR-like"/>
    <property type="match status" value="2"/>
</dbReference>
<dbReference type="PROSITE" id="PS51823">
    <property type="entry name" value="CLU"/>
    <property type="match status" value="1"/>
</dbReference>
<dbReference type="PROSITE" id="PS50005">
    <property type="entry name" value="TPR"/>
    <property type="match status" value="3"/>
</dbReference>
<dbReference type="PROSITE" id="PS50293">
    <property type="entry name" value="TPR_REGION"/>
    <property type="match status" value="1"/>
</dbReference>
<sequence>MAPKAGKTKPHKSKGEKKKKEEKVLPTVIEISVETPDESQVTLKGISTDRILDVRKLLAVHVQTCHFTNFSLSHQVRGTKLKDSVDIVSLKPCHLTIVEEDYTEEQATAHIRRLLDIVACTTAFGPSKPPVSRTLPKDSEKKESGSTDGDSPTEKDAGDSNSGLSPKPKESEKKSVGACEAQSAEGAAKSDIDMCPPTRLGQFYEFFSFSYLTPPIQYIRRSVRPSKEDKGLDDLFQIDIKVSSGKPFTVVASRTGFYPPGKQQLLCHSLVELLQQISRPFDAAYDALMKAFIEHNKFGNLPYGFRANTWVVPPVVADSPSTFPSLPVEDETWGGDGGGVGRSGKYDKRKWAKEFAILAAMPCKTPEERQVRDRKAFLLHSLFVDVSVFKAVEIIKKIVENNQCSLKDPAALGFHEERIGDLIVRVARDDPDASAKLDRKSDGTQVLEISQEELAQRNLLKGITADESATVHDTSTLGVVVVRHCGCTAIVKVASEFKLNDGHILQDIDIEDQSEGGANALNVNSLRTLLHKSSTPSSLAQRSPNADSEQIRVAKSLVRKVIEDSLKKLEIEPSRYSKPIRWELGACWVQHLQNQASSKSESKKTEDPKPEPAVKGLGKQGALLKEIKRKIDVKANKTEQGKEAPANDTDNTSETEDQKELEKQNEEIEKMWKELVTETAYQRLKESETGFHLKSPKELIEMARKYYTDTALPKLVADFGSLELSPVDGRTLTDFMHTRGLQMHSLGRVVELAEKLPHVQSLCVHEMIVRAYKHILQAVVAAVENTADVATSIATCLNVLLGTPSDTESVYDEKIKWTWVETFISKRFGWDWKHEGCQELRKFSILRGLSHKVGLELVPKDYEMDTSYPFKKFDIISMVPVYKHVACSSADGRTLLESSKTSLDKGKLEDAVNYGTKALAKLVAVCGPYHRMTAGAYSLLAVVLYHTGDFNQATIYQQKALDINERELGLDHPDTMKSYGDLAVFYYRLQHTELALKYVNRALYLLHLTCGPSHPNTAATYINVAMMEEGMKNAHVALRYLHEALKCNQRLLGADHIQTAASYHAIAIALSLMDAYSLSVQHEQTTLQILQAKLGPEDLRTQDAAAWLEYFESKALEQQEAARNGTPKPDASISSKGHLSVSDLLDYITPDSGIKARDAQRKARPKVKGKPGQSPGPVSEENQKDDEILSPAHLTGESSSDKENKSETKSEEKKVENFDLEQSKPQDQLKLVKPEATVHEDDDSDEGWQEAVPKNRFSSGRRTRPSLAKLNTNFMNVTQQPSRSRGKSTNFTSPRTSSNELSISVAGSTSSPASKMFVKSPLNKKQNNSSVVGERPVNDKSALASSACTEQINKPTPMLSPVSVKAGKLFSYKEVALAPPGTIVKIVAEQLPEETKAPQNLDAAKIAVDGPEKVNAQDAESENKHVATETEAENTDCNEQGRVVVGGSELTSSPKEIKNVEVEKAAEKAFPIETAVSNARPGKSKSAQMAEDSDTCLLNKSPTANDSNGSESVIGVKLQKDLCDAELKTVDGETENLPNGDSSPKSSVAADGEKQDACEAQKEMSKKLSASAPPYTPTTIPIFGSIAVPGFKDHGGILPSPLNMPPMLPINHVRRSTPHQSVTARVPYGPRLSGGGYNRSGNRVPRNKPSFPNSTESNGEANQFNGPRIMNPHAAEFIPSQPWVSNGYPVSPNGYLASPNGAEITQNGYPLSPVAGGYPCNMSVTQPQDGLVSEELPGAGSSEEKSGSEEESNNDKNAGEDDEAVGQETTDTPENGHSTVGEVETTSHETCDEKNGERQGGKCWGDYSDNEIEQIEVTS</sequence>
<evidence type="ECO:0000250" key="1">
    <source>
        <dbReference type="UniProtKB" id="F4HS99"/>
    </source>
</evidence>
<evidence type="ECO:0000255" key="2"/>
<evidence type="ECO:0000255" key="3">
    <source>
        <dbReference type="PROSITE-ProRule" id="PRU01167"/>
    </source>
</evidence>
<evidence type="ECO:0000256" key="4">
    <source>
        <dbReference type="SAM" id="MobiDB-lite"/>
    </source>
</evidence>
<evidence type="ECO:0000269" key="5">
    <source>
    </source>
</evidence>
<evidence type="ECO:0000269" key="6">
    <source>
    </source>
</evidence>
<evidence type="ECO:0000303" key="7">
    <source>
    </source>
</evidence>
<evidence type="ECO:0000303" key="8">
    <source>
    </source>
</evidence>
<evidence type="ECO:0000305" key="9"/>
<evidence type="ECO:0000312" key="10">
    <source>
        <dbReference type="Araport" id="AT4G28080"/>
    </source>
</evidence>
<evidence type="ECO:0000312" key="11">
    <source>
        <dbReference type="EMBL" id="CAB36777.1"/>
    </source>
</evidence>
<evidence type="ECO:0007744" key="12">
    <source>
    </source>
</evidence>
<reference key="1">
    <citation type="journal article" date="1999" name="Nature">
        <title>Sequence and analysis of chromosome 4 of the plant Arabidopsis thaliana.</title>
        <authorList>
            <person name="Mayer K.F.X."/>
            <person name="Schueller C."/>
            <person name="Wambutt R."/>
            <person name="Murphy G."/>
            <person name="Volckaert G."/>
            <person name="Pohl T."/>
            <person name="Duesterhoeft A."/>
            <person name="Stiekema W."/>
            <person name="Entian K.-D."/>
            <person name="Terryn N."/>
            <person name="Harris B."/>
            <person name="Ansorge W."/>
            <person name="Brandt P."/>
            <person name="Grivell L.A."/>
            <person name="Rieger M."/>
            <person name="Weichselgartner M."/>
            <person name="de Simone V."/>
            <person name="Obermaier B."/>
            <person name="Mache R."/>
            <person name="Mueller M."/>
            <person name="Kreis M."/>
            <person name="Delseny M."/>
            <person name="Puigdomenech P."/>
            <person name="Watson M."/>
            <person name="Schmidtheini T."/>
            <person name="Reichert B."/>
            <person name="Portetelle D."/>
            <person name="Perez-Alonso M."/>
            <person name="Boutry M."/>
            <person name="Bancroft I."/>
            <person name="Vos P."/>
            <person name="Hoheisel J."/>
            <person name="Zimmermann W."/>
            <person name="Wedler H."/>
            <person name="Ridley P."/>
            <person name="Langham S.-A."/>
            <person name="McCullagh B."/>
            <person name="Bilham L."/>
            <person name="Robben J."/>
            <person name="van der Schueren J."/>
            <person name="Grymonprez B."/>
            <person name="Chuang Y.-J."/>
            <person name="Vandenbussche F."/>
            <person name="Braeken M."/>
            <person name="Weltjens I."/>
            <person name="Voet M."/>
            <person name="Bastiaens I."/>
            <person name="Aert R."/>
            <person name="Defoor E."/>
            <person name="Weitzenegger T."/>
            <person name="Bothe G."/>
            <person name="Ramsperger U."/>
            <person name="Hilbert H."/>
            <person name="Braun M."/>
            <person name="Holzer E."/>
            <person name="Brandt A."/>
            <person name="Peters S."/>
            <person name="van Staveren M."/>
            <person name="Dirkse W."/>
            <person name="Mooijman P."/>
            <person name="Klein Lankhorst R."/>
            <person name="Rose M."/>
            <person name="Hauf J."/>
            <person name="Koetter P."/>
            <person name="Berneiser S."/>
            <person name="Hempel S."/>
            <person name="Feldpausch M."/>
            <person name="Lamberth S."/>
            <person name="Van den Daele H."/>
            <person name="De Keyser A."/>
            <person name="Buysshaert C."/>
            <person name="Gielen J."/>
            <person name="Villarroel R."/>
            <person name="De Clercq R."/>
            <person name="van Montagu M."/>
            <person name="Rogers J."/>
            <person name="Cronin A."/>
            <person name="Quail M.A."/>
            <person name="Bray-Allen S."/>
            <person name="Clark L."/>
            <person name="Doggett J."/>
            <person name="Hall S."/>
            <person name="Kay M."/>
            <person name="Lennard N."/>
            <person name="McLay K."/>
            <person name="Mayes R."/>
            <person name="Pettett A."/>
            <person name="Rajandream M.A."/>
            <person name="Lyne M."/>
            <person name="Benes V."/>
            <person name="Rechmann S."/>
            <person name="Borkova D."/>
            <person name="Bloecker H."/>
            <person name="Scharfe M."/>
            <person name="Grimm M."/>
            <person name="Loehnert T.-H."/>
            <person name="Dose S."/>
            <person name="de Haan M."/>
            <person name="Maarse A.C."/>
            <person name="Schaefer M."/>
            <person name="Mueller-Auer S."/>
            <person name="Gabel C."/>
            <person name="Fuchs M."/>
            <person name="Fartmann B."/>
            <person name="Granderath K."/>
            <person name="Dauner D."/>
            <person name="Herzl A."/>
            <person name="Neumann S."/>
            <person name="Argiriou A."/>
            <person name="Vitale D."/>
            <person name="Liguori R."/>
            <person name="Piravandi E."/>
            <person name="Massenet O."/>
            <person name="Quigley F."/>
            <person name="Clabauld G."/>
            <person name="Muendlein A."/>
            <person name="Felber R."/>
            <person name="Schnabl S."/>
            <person name="Hiller R."/>
            <person name="Schmidt W."/>
            <person name="Lecharny A."/>
            <person name="Aubourg S."/>
            <person name="Chefdor F."/>
            <person name="Cooke R."/>
            <person name="Berger C."/>
            <person name="Monfort A."/>
            <person name="Casacuberta E."/>
            <person name="Gibbons T."/>
            <person name="Weber N."/>
            <person name="Vandenbol M."/>
            <person name="Bargues M."/>
            <person name="Terol J."/>
            <person name="Torres A."/>
            <person name="Perez-Perez A."/>
            <person name="Purnelle B."/>
            <person name="Bent E."/>
            <person name="Johnson S."/>
            <person name="Tacon D."/>
            <person name="Jesse T."/>
            <person name="Heijnen L."/>
            <person name="Schwarz S."/>
            <person name="Scholler P."/>
            <person name="Heber S."/>
            <person name="Francs P."/>
            <person name="Bielke C."/>
            <person name="Frishman D."/>
            <person name="Haase D."/>
            <person name="Lemcke K."/>
            <person name="Mewes H.-W."/>
            <person name="Stocker S."/>
            <person name="Zaccaria P."/>
            <person name="Bevan M."/>
            <person name="Wilson R.K."/>
            <person name="de la Bastide M."/>
            <person name="Habermann K."/>
            <person name="Parnell L."/>
            <person name="Dedhia N."/>
            <person name="Gnoj L."/>
            <person name="Schutz K."/>
            <person name="Huang E."/>
            <person name="Spiegel L."/>
            <person name="Sekhon M."/>
            <person name="Murray J."/>
            <person name="Sheet P."/>
            <person name="Cordes M."/>
            <person name="Abu-Threideh J."/>
            <person name="Stoneking T."/>
            <person name="Kalicki J."/>
            <person name="Graves T."/>
            <person name="Harmon G."/>
            <person name="Edwards J."/>
            <person name="Latreille P."/>
            <person name="Courtney L."/>
            <person name="Cloud J."/>
            <person name="Abbott A."/>
            <person name="Scott K."/>
            <person name="Johnson D."/>
            <person name="Minx P."/>
            <person name="Bentley D."/>
            <person name="Fulton B."/>
            <person name="Miller N."/>
            <person name="Greco T."/>
            <person name="Kemp K."/>
            <person name="Kramer J."/>
            <person name="Fulton L."/>
            <person name="Mardis E."/>
            <person name="Dante M."/>
            <person name="Pepin K."/>
            <person name="Hillier L.W."/>
            <person name="Nelson J."/>
            <person name="Spieth J."/>
            <person name="Ryan E."/>
            <person name="Andrews S."/>
            <person name="Geisel C."/>
            <person name="Layman D."/>
            <person name="Du H."/>
            <person name="Ali J."/>
            <person name="Berghoff A."/>
            <person name="Jones K."/>
            <person name="Drone K."/>
            <person name="Cotton M."/>
            <person name="Joshu C."/>
            <person name="Antonoiu B."/>
            <person name="Zidanic M."/>
            <person name="Strong C."/>
            <person name="Sun H."/>
            <person name="Lamar B."/>
            <person name="Yordan C."/>
            <person name="Ma P."/>
            <person name="Zhong J."/>
            <person name="Preston R."/>
            <person name="Vil D."/>
            <person name="Shekher M."/>
            <person name="Matero A."/>
            <person name="Shah R."/>
            <person name="Swaby I.K."/>
            <person name="O'Shaughnessy A."/>
            <person name="Rodriguez M."/>
            <person name="Hoffman J."/>
            <person name="Till S."/>
            <person name="Granat S."/>
            <person name="Shohdy N."/>
            <person name="Hasegawa A."/>
            <person name="Hameed A."/>
            <person name="Lodhi M."/>
            <person name="Johnson A."/>
            <person name="Chen E."/>
            <person name="Marra M.A."/>
            <person name="Martienssen R."/>
            <person name="McCombie W.R."/>
        </authorList>
    </citation>
    <scope>NUCLEOTIDE SEQUENCE [LARGE SCALE GENOMIC DNA]</scope>
    <source>
        <strain>cv. Columbia</strain>
    </source>
</reference>
<reference key="2">
    <citation type="journal article" date="2017" name="Plant J.">
        <title>Araport11: a complete reannotation of the Arabidopsis thaliana reference genome.</title>
        <authorList>
            <person name="Cheng C.Y."/>
            <person name="Krishnakumar V."/>
            <person name="Chan A.P."/>
            <person name="Thibaud-Nissen F."/>
            <person name="Schobel S."/>
            <person name="Town C.D."/>
        </authorList>
    </citation>
    <scope>GENOME REANNOTATION</scope>
    <source>
        <strain>cv. Columbia</strain>
    </source>
</reference>
<reference key="3">
    <citation type="journal article" date="2009" name="J. Proteomics">
        <title>Phosphoproteomic analysis of nuclei-enriched fractions from Arabidopsis thaliana.</title>
        <authorList>
            <person name="Jones A.M.E."/>
            <person name="MacLean D."/>
            <person name="Studholme D.J."/>
            <person name="Serna-Sanz A."/>
            <person name="Andreasson E."/>
            <person name="Rathjen J.P."/>
            <person name="Peck S.C."/>
        </authorList>
    </citation>
    <scope>IDENTIFICATION BY MASS SPECTROMETRY [LARGE SCALE ANALYSIS]</scope>
    <source>
        <strain>cv. Columbia</strain>
    </source>
</reference>
<reference key="4">
    <citation type="journal article" date="2009" name="Plant Physiol.">
        <title>Large-scale Arabidopsis phosphoproteome profiling reveals novel chloroplast kinase substrates and phosphorylation networks.</title>
        <authorList>
            <person name="Reiland S."/>
            <person name="Messerli G."/>
            <person name="Baerenfaller K."/>
            <person name="Gerrits B."/>
            <person name="Endler A."/>
            <person name="Grossmann J."/>
            <person name="Gruissem W."/>
            <person name="Baginsky S."/>
        </authorList>
    </citation>
    <scope>PHOSPHORYLATION [LARGE SCALE ANALYSIS] AT SER-1244 AND SER-1320</scope>
    <scope>IDENTIFICATION BY MASS SPECTROMETRY [LARGE SCALE ANALYSIS]</scope>
</reference>
<reference key="5">
    <citation type="journal article" date="2011" name="Dev. Biol.">
        <title>Metabolic sugar signal promotes Arabidopsis meristematic proliferation via G2.</title>
        <authorList>
            <person name="Skylar A."/>
            <person name="Sung F."/>
            <person name="Hong F."/>
            <person name="Chory J."/>
            <person name="Wu X."/>
        </authorList>
    </citation>
    <scope>FUNCTION</scope>
    <scope>INDUCTION BY SUCROSE</scope>
    <scope>TISSUE SPECIFICITY</scope>
    <scope>DISRUPTION PHENOTYPE</scope>
</reference>
<reference key="6">
    <citation type="journal article" date="2016" name="Proc. Natl. Acad. Sci. U.S.A.">
        <title>REDUCED CHLOROPLAST COVERAGE genes from Arabidopsis thaliana help to establish the size of the chloroplast compartment.</title>
        <authorList>
            <person name="Larkin R.M."/>
            <person name="Stefano G."/>
            <person name="Ruckle M.E."/>
            <person name="Stavoe A.K."/>
            <person name="Sinkler C.A."/>
            <person name="Brandizzi F."/>
            <person name="Malmstrom C.M."/>
            <person name="Osteryoung K.W."/>
        </authorList>
    </citation>
    <scope>FUNCTION</scope>
    <scope>DISRUPTION PHENOTYPE</scope>
</reference>
<organism>
    <name type="scientific">Arabidopsis thaliana</name>
    <name type="common">Mouse-ear cress</name>
    <dbReference type="NCBI Taxonomy" id="3702"/>
    <lineage>
        <taxon>Eukaryota</taxon>
        <taxon>Viridiplantae</taxon>
        <taxon>Streptophyta</taxon>
        <taxon>Embryophyta</taxon>
        <taxon>Tracheophyta</taxon>
        <taxon>Spermatophyta</taxon>
        <taxon>Magnoliopsida</taxon>
        <taxon>eudicotyledons</taxon>
        <taxon>Gunneridae</taxon>
        <taxon>Pentapetalae</taxon>
        <taxon>rosids</taxon>
        <taxon>malvids</taxon>
        <taxon>Brassicales</taxon>
        <taxon>Brassicaceae</taxon>
        <taxon>Camelineae</taxon>
        <taxon>Arabidopsis</taxon>
    </lineage>
</organism>
<protein>
    <recommendedName>
        <fullName evidence="8">Protein REDUCED CHLOROPLAST COVERAGE 2</fullName>
    </recommendedName>
    <alternativeName>
        <fullName evidence="7">Protein TPR-domain suppressor of STIMPY</fullName>
    </alternativeName>
</protein>
<gene>
    <name evidence="8" type="primary">REC2</name>
    <name evidence="7" type="synonym">TSS</name>
    <name evidence="10" type="ordered locus">At4g28080</name>
    <name evidence="11" type="ORF">T13J8.190</name>
</gene>
<feature type="chain" id="PRO_0000433608" description="Protein REDUCED CHLOROPLAST COVERAGE 2">
    <location>
        <begin position="1"/>
        <end position="1819"/>
    </location>
</feature>
<feature type="domain" description="Clu" evidence="3">
    <location>
        <begin position="329"/>
        <end position="603"/>
    </location>
</feature>
<feature type="repeat" description="TPR 1" evidence="2">
    <location>
        <begin position="892"/>
        <end position="925"/>
    </location>
</feature>
<feature type="repeat" description="TPR 2" evidence="2">
    <location>
        <begin position="934"/>
        <end position="967"/>
    </location>
</feature>
<feature type="repeat" description="TPR 3" evidence="2">
    <location>
        <begin position="976"/>
        <end position="1009"/>
    </location>
</feature>
<feature type="repeat" description="TPR 4" evidence="2">
    <location>
        <begin position="1018"/>
        <end position="1051"/>
    </location>
</feature>
<feature type="repeat" description="TPR 5" evidence="2">
    <location>
        <begin position="1060"/>
        <end position="1093"/>
    </location>
</feature>
<feature type="region of interest" description="Disordered" evidence="4">
    <location>
        <begin position="1"/>
        <end position="23"/>
    </location>
</feature>
<feature type="region of interest" description="Disordered" evidence="4">
    <location>
        <begin position="128"/>
        <end position="180"/>
    </location>
</feature>
<feature type="region of interest" description="Disordered" evidence="4">
    <location>
        <begin position="595"/>
        <end position="619"/>
    </location>
</feature>
<feature type="region of interest" description="Disordered" evidence="4">
    <location>
        <begin position="634"/>
        <end position="664"/>
    </location>
</feature>
<feature type="region of interest" description="Disordered" evidence="4">
    <location>
        <begin position="1152"/>
        <end position="1360"/>
    </location>
</feature>
<feature type="region of interest" description="Disordered" evidence="4">
    <location>
        <begin position="1413"/>
        <end position="1456"/>
    </location>
</feature>
<feature type="region of interest" description="Disordered" evidence="4">
    <location>
        <begin position="1468"/>
        <end position="1513"/>
    </location>
</feature>
<feature type="region of interest" description="Disordered" evidence="4">
    <location>
        <begin position="1527"/>
        <end position="1573"/>
    </location>
</feature>
<feature type="region of interest" description="Disordered" evidence="4">
    <location>
        <begin position="1616"/>
        <end position="1670"/>
    </location>
</feature>
<feature type="region of interest" description="Disordered" evidence="4">
    <location>
        <begin position="1731"/>
        <end position="1809"/>
    </location>
</feature>
<feature type="coiled-coil region" evidence="2">
    <location>
        <begin position="649"/>
        <end position="680"/>
    </location>
</feature>
<feature type="compositionally biased region" description="Basic residues" evidence="4">
    <location>
        <begin position="1"/>
        <end position="17"/>
    </location>
</feature>
<feature type="compositionally biased region" description="Basic and acidic residues" evidence="4">
    <location>
        <begin position="135"/>
        <end position="145"/>
    </location>
</feature>
<feature type="compositionally biased region" description="Basic and acidic residues" evidence="4">
    <location>
        <begin position="600"/>
        <end position="612"/>
    </location>
</feature>
<feature type="compositionally biased region" description="Basic and acidic residues" evidence="4">
    <location>
        <begin position="1199"/>
        <end position="1224"/>
    </location>
</feature>
<feature type="compositionally biased region" description="Basic and acidic residues" evidence="4">
    <location>
        <begin position="1230"/>
        <end position="1239"/>
    </location>
</feature>
<feature type="compositionally biased region" description="Polar residues" evidence="4">
    <location>
        <begin position="1269"/>
        <end position="1313"/>
    </location>
</feature>
<feature type="compositionally biased region" description="Polar residues" evidence="4">
    <location>
        <begin position="1343"/>
        <end position="1354"/>
    </location>
</feature>
<feature type="compositionally biased region" description="Polar residues" evidence="4">
    <location>
        <begin position="1496"/>
        <end position="1511"/>
    </location>
</feature>
<feature type="compositionally biased region" description="Polar residues" evidence="4">
    <location>
        <begin position="1536"/>
        <end position="1546"/>
    </location>
</feature>
<feature type="compositionally biased region" description="Basic and acidic residues" evidence="4">
    <location>
        <begin position="1551"/>
        <end position="1566"/>
    </location>
</feature>
<feature type="compositionally biased region" description="Polar residues" evidence="4">
    <location>
        <begin position="1650"/>
        <end position="1665"/>
    </location>
</feature>
<feature type="compositionally biased region" description="Basic and acidic residues" evidence="4">
    <location>
        <begin position="1742"/>
        <end position="1759"/>
    </location>
</feature>
<feature type="compositionally biased region" description="Polar residues" evidence="4">
    <location>
        <begin position="1767"/>
        <end position="1778"/>
    </location>
</feature>
<feature type="compositionally biased region" description="Basic and acidic residues" evidence="4">
    <location>
        <begin position="1785"/>
        <end position="1800"/>
    </location>
</feature>
<feature type="modified residue" description="Phosphoserine" evidence="12">
    <location>
        <position position="1244"/>
    </location>
</feature>
<feature type="modified residue" description="Phosphoserine" evidence="12">
    <location>
        <position position="1320"/>
    </location>
</feature>